<protein>
    <recommendedName>
        <fullName evidence="1">LexA repressor</fullName>
        <ecNumber evidence="1">3.4.21.88</ecNumber>
    </recommendedName>
</protein>
<name>LEXA_ECO45</name>
<proteinExistence type="inferred from homology"/>
<dbReference type="EC" id="3.4.21.88" evidence="1"/>
<dbReference type="EMBL" id="CU928161">
    <property type="protein sequence ID" value="CAR05677.1"/>
    <property type="molecule type" value="Genomic_DNA"/>
</dbReference>
<dbReference type="RefSeq" id="WP_000646078.1">
    <property type="nucleotide sequence ID" value="NC_011742.1"/>
</dbReference>
<dbReference type="SMR" id="B7MJ33"/>
<dbReference type="MEROPS" id="S24.001"/>
<dbReference type="GeneID" id="93777788"/>
<dbReference type="KEGG" id="ecz:ECS88_4517"/>
<dbReference type="HOGENOM" id="CLU_066192_45_3_6"/>
<dbReference type="Proteomes" id="UP000000747">
    <property type="component" value="Chromosome"/>
</dbReference>
<dbReference type="GO" id="GO:0003677">
    <property type="term" value="F:DNA binding"/>
    <property type="evidence" value="ECO:0007669"/>
    <property type="project" value="UniProtKB-UniRule"/>
</dbReference>
<dbReference type="GO" id="GO:0004252">
    <property type="term" value="F:serine-type endopeptidase activity"/>
    <property type="evidence" value="ECO:0007669"/>
    <property type="project" value="UniProtKB-UniRule"/>
</dbReference>
<dbReference type="GO" id="GO:0006281">
    <property type="term" value="P:DNA repair"/>
    <property type="evidence" value="ECO:0007669"/>
    <property type="project" value="UniProtKB-UniRule"/>
</dbReference>
<dbReference type="GO" id="GO:0006260">
    <property type="term" value="P:DNA replication"/>
    <property type="evidence" value="ECO:0007669"/>
    <property type="project" value="UniProtKB-UniRule"/>
</dbReference>
<dbReference type="GO" id="GO:0045892">
    <property type="term" value="P:negative regulation of DNA-templated transcription"/>
    <property type="evidence" value="ECO:0007669"/>
    <property type="project" value="UniProtKB-UniRule"/>
</dbReference>
<dbReference type="GO" id="GO:0006508">
    <property type="term" value="P:proteolysis"/>
    <property type="evidence" value="ECO:0007669"/>
    <property type="project" value="InterPro"/>
</dbReference>
<dbReference type="GO" id="GO:0009432">
    <property type="term" value="P:SOS response"/>
    <property type="evidence" value="ECO:0007669"/>
    <property type="project" value="UniProtKB-UniRule"/>
</dbReference>
<dbReference type="CDD" id="cd06529">
    <property type="entry name" value="S24_LexA-like"/>
    <property type="match status" value="1"/>
</dbReference>
<dbReference type="FunFam" id="1.10.10.10:FF:000009">
    <property type="entry name" value="LexA repressor"/>
    <property type="match status" value="1"/>
</dbReference>
<dbReference type="FunFam" id="2.10.109.10:FF:000001">
    <property type="entry name" value="LexA repressor"/>
    <property type="match status" value="1"/>
</dbReference>
<dbReference type="Gene3D" id="2.10.109.10">
    <property type="entry name" value="Umud Fragment, subunit A"/>
    <property type="match status" value="1"/>
</dbReference>
<dbReference type="Gene3D" id="1.10.10.10">
    <property type="entry name" value="Winged helix-like DNA-binding domain superfamily/Winged helix DNA-binding domain"/>
    <property type="match status" value="1"/>
</dbReference>
<dbReference type="HAMAP" id="MF_00015">
    <property type="entry name" value="LexA"/>
    <property type="match status" value="1"/>
</dbReference>
<dbReference type="InterPro" id="IPR006200">
    <property type="entry name" value="LexA"/>
</dbReference>
<dbReference type="InterPro" id="IPR039418">
    <property type="entry name" value="LexA-like"/>
</dbReference>
<dbReference type="InterPro" id="IPR036286">
    <property type="entry name" value="LexA/Signal_pep-like_sf"/>
</dbReference>
<dbReference type="InterPro" id="IPR006199">
    <property type="entry name" value="LexA_DNA-bd_dom"/>
</dbReference>
<dbReference type="InterPro" id="IPR050077">
    <property type="entry name" value="LexA_repressor"/>
</dbReference>
<dbReference type="InterPro" id="IPR006197">
    <property type="entry name" value="Peptidase_S24_LexA"/>
</dbReference>
<dbReference type="InterPro" id="IPR015927">
    <property type="entry name" value="Peptidase_S24_S26A/B/C"/>
</dbReference>
<dbReference type="InterPro" id="IPR036388">
    <property type="entry name" value="WH-like_DNA-bd_sf"/>
</dbReference>
<dbReference type="InterPro" id="IPR036390">
    <property type="entry name" value="WH_DNA-bd_sf"/>
</dbReference>
<dbReference type="NCBIfam" id="TIGR00498">
    <property type="entry name" value="lexA"/>
    <property type="match status" value="1"/>
</dbReference>
<dbReference type="PANTHER" id="PTHR33516">
    <property type="entry name" value="LEXA REPRESSOR"/>
    <property type="match status" value="1"/>
</dbReference>
<dbReference type="PANTHER" id="PTHR33516:SF2">
    <property type="entry name" value="LEXA REPRESSOR-RELATED"/>
    <property type="match status" value="1"/>
</dbReference>
<dbReference type="Pfam" id="PF01726">
    <property type="entry name" value="LexA_DNA_bind"/>
    <property type="match status" value="1"/>
</dbReference>
<dbReference type="Pfam" id="PF00717">
    <property type="entry name" value="Peptidase_S24"/>
    <property type="match status" value="1"/>
</dbReference>
<dbReference type="PRINTS" id="PR00726">
    <property type="entry name" value="LEXASERPTASE"/>
</dbReference>
<dbReference type="SUPFAM" id="SSF51306">
    <property type="entry name" value="LexA/Signal peptidase"/>
    <property type="match status" value="1"/>
</dbReference>
<dbReference type="SUPFAM" id="SSF46785">
    <property type="entry name" value="Winged helix' DNA-binding domain"/>
    <property type="match status" value="1"/>
</dbReference>
<organism>
    <name type="scientific">Escherichia coli O45:K1 (strain S88 / ExPEC)</name>
    <dbReference type="NCBI Taxonomy" id="585035"/>
    <lineage>
        <taxon>Bacteria</taxon>
        <taxon>Pseudomonadati</taxon>
        <taxon>Pseudomonadota</taxon>
        <taxon>Gammaproteobacteria</taxon>
        <taxon>Enterobacterales</taxon>
        <taxon>Enterobacteriaceae</taxon>
        <taxon>Escherichia</taxon>
    </lineage>
</organism>
<gene>
    <name evidence="1" type="primary">lexA</name>
    <name type="ordered locus">ECS88_4517</name>
</gene>
<evidence type="ECO:0000255" key="1">
    <source>
        <dbReference type="HAMAP-Rule" id="MF_00015"/>
    </source>
</evidence>
<sequence length="202" mass="22358">MKALTARQQEVFDLIRDHISQTGMPPTRAEIAQRLGFRSPNAAEEHLKALARKGVIEIVSGASRGIRLLQEEEEGLPLVGRVAAGEPLLAQQHIEGHYQVDPSLFKPNADFLLRVSGMSMKDIGIMDGDLLAVHKTQDVRNGQVVVARIDDEVTVKRLKKQGNKVELLPENSEFKPIVVDLRQQSFTIEGLAVGVIRNGDWL</sequence>
<reference key="1">
    <citation type="journal article" date="2009" name="PLoS Genet.">
        <title>Organised genome dynamics in the Escherichia coli species results in highly diverse adaptive paths.</title>
        <authorList>
            <person name="Touchon M."/>
            <person name="Hoede C."/>
            <person name="Tenaillon O."/>
            <person name="Barbe V."/>
            <person name="Baeriswyl S."/>
            <person name="Bidet P."/>
            <person name="Bingen E."/>
            <person name="Bonacorsi S."/>
            <person name="Bouchier C."/>
            <person name="Bouvet O."/>
            <person name="Calteau A."/>
            <person name="Chiapello H."/>
            <person name="Clermont O."/>
            <person name="Cruveiller S."/>
            <person name="Danchin A."/>
            <person name="Diard M."/>
            <person name="Dossat C."/>
            <person name="Karoui M.E."/>
            <person name="Frapy E."/>
            <person name="Garry L."/>
            <person name="Ghigo J.M."/>
            <person name="Gilles A.M."/>
            <person name="Johnson J."/>
            <person name="Le Bouguenec C."/>
            <person name="Lescat M."/>
            <person name="Mangenot S."/>
            <person name="Martinez-Jehanne V."/>
            <person name="Matic I."/>
            <person name="Nassif X."/>
            <person name="Oztas S."/>
            <person name="Petit M.A."/>
            <person name="Pichon C."/>
            <person name="Rouy Z."/>
            <person name="Ruf C.S."/>
            <person name="Schneider D."/>
            <person name="Tourret J."/>
            <person name="Vacherie B."/>
            <person name="Vallenet D."/>
            <person name="Medigue C."/>
            <person name="Rocha E.P.C."/>
            <person name="Denamur E."/>
        </authorList>
    </citation>
    <scope>NUCLEOTIDE SEQUENCE [LARGE SCALE GENOMIC DNA]</scope>
    <source>
        <strain>S88 / ExPEC</strain>
    </source>
</reference>
<comment type="function">
    <text evidence="1">Represses a number of genes involved in the response to DNA damage (SOS response), including recA and lexA. Binds to the 16 bp palindromic sequence 5'-CTGTATATATATACAG-3'. In the presence of single-stranded DNA, RecA interacts with LexA causing an autocatalytic cleavage which disrupts the DNA-binding part of LexA, leading to derepression of the SOS regulon and eventually DNA repair.</text>
</comment>
<comment type="catalytic activity">
    <reaction evidence="1">
        <text>Hydrolysis of Ala-|-Gly bond in repressor LexA.</text>
        <dbReference type="EC" id="3.4.21.88"/>
    </reaction>
</comment>
<comment type="subunit">
    <text evidence="1">Homodimer.</text>
</comment>
<comment type="similarity">
    <text evidence="1">Belongs to the peptidase S24 family.</text>
</comment>
<keyword id="KW-0068">Autocatalytic cleavage</keyword>
<keyword id="KW-0227">DNA damage</keyword>
<keyword id="KW-0234">DNA repair</keyword>
<keyword id="KW-0235">DNA replication</keyword>
<keyword id="KW-0238">DNA-binding</keyword>
<keyword id="KW-0378">Hydrolase</keyword>
<keyword id="KW-1185">Reference proteome</keyword>
<keyword id="KW-0678">Repressor</keyword>
<keyword id="KW-0742">SOS response</keyword>
<keyword id="KW-0804">Transcription</keyword>
<keyword id="KW-0805">Transcription regulation</keyword>
<feature type="chain" id="PRO_1000192767" description="LexA repressor">
    <location>
        <begin position="1"/>
        <end position="202"/>
    </location>
</feature>
<feature type="DNA-binding region" description="H-T-H motif" evidence="1">
    <location>
        <begin position="28"/>
        <end position="48"/>
    </location>
</feature>
<feature type="active site" description="For autocatalytic cleavage activity" evidence="1">
    <location>
        <position position="119"/>
    </location>
</feature>
<feature type="active site" description="For autocatalytic cleavage activity" evidence="1">
    <location>
        <position position="156"/>
    </location>
</feature>
<feature type="site" description="Cleavage; by autolysis" evidence="1">
    <location>
        <begin position="84"/>
        <end position="85"/>
    </location>
</feature>
<accession>B7MJ33</accession>